<feature type="chain" id="PRO_0000057123" description="Nudix hydrolase 3">
    <location>
        <begin position="1"/>
        <end position="772"/>
    </location>
</feature>
<feature type="domain" description="Nudix hydrolase" evidence="2">
    <location>
        <begin position="30"/>
        <end position="172"/>
    </location>
</feature>
<feature type="region of interest" description="Disordered" evidence="3">
    <location>
        <begin position="1"/>
        <end position="25"/>
    </location>
</feature>
<feature type="short sequence motif" description="Nudix box">
    <location>
        <begin position="69"/>
        <end position="90"/>
    </location>
</feature>
<feature type="compositionally biased region" description="Basic and acidic residues" evidence="3">
    <location>
        <begin position="1"/>
        <end position="14"/>
    </location>
</feature>
<feature type="binding site" evidence="1">
    <location>
        <position position="84"/>
    </location>
    <ligand>
        <name>Mg(2+)</name>
        <dbReference type="ChEBI" id="CHEBI:18420"/>
    </ligand>
</feature>
<feature type="binding site" evidence="1">
    <location>
        <position position="88"/>
    </location>
    <ligand>
        <name>Mg(2+)</name>
        <dbReference type="ChEBI" id="CHEBI:18420"/>
    </ligand>
</feature>
<feature type="splice variant" id="VSP_014284" description="In isoform 2." evidence="5">
    <original>CVTNDGK</original>
    <variation>WFVSWPI</variation>
    <location>
        <begin position="108"/>
        <end position="114"/>
    </location>
</feature>
<feature type="splice variant" id="VSP_014285" description="In isoform 2." evidence="5">
    <location>
        <begin position="115"/>
        <end position="772"/>
    </location>
</feature>
<feature type="sequence conflict" description="In Ref. 4; AAL08298." evidence="6" ref="4">
    <original>V</original>
    <variation>F</variation>
    <location>
        <position position="657"/>
    </location>
</feature>
<dbReference type="EC" id="3.6.1.-"/>
<dbReference type="EMBL" id="AC010793">
    <property type="protein sequence ID" value="AAF68108.1"/>
    <property type="status" value="ALT_SEQ"/>
    <property type="molecule type" value="Genomic_DNA"/>
</dbReference>
<dbReference type="EMBL" id="CP002684">
    <property type="protein sequence ID" value="AEE36287.1"/>
    <property type="molecule type" value="Genomic_DNA"/>
</dbReference>
<dbReference type="EMBL" id="CP002684">
    <property type="protein sequence ID" value="ANM58081.1"/>
    <property type="molecule type" value="Genomic_DNA"/>
</dbReference>
<dbReference type="EMBL" id="AK117805">
    <property type="protein sequence ID" value="BAC42449.1"/>
    <property type="molecule type" value="mRNA"/>
</dbReference>
<dbReference type="EMBL" id="AY056442">
    <property type="protein sequence ID" value="AAL08298.1"/>
    <property type="status" value="ALT_FRAME"/>
    <property type="molecule type" value="mRNA"/>
</dbReference>
<dbReference type="EMBL" id="AY120774">
    <property type="protein sequence ID" value="AAM53332.1"/>
    <property type="molecule type" value="mRNA"/>
</dbReference>
<dbReference type="EMBL" id="BT000142">
    <property type="protein sequence ID" value="AAN15461.1"/>
    <property type="molecule type" value="mRNA"/>
</dbReference>
<dbReference type="RefSeq" id="NP_001320544.1">
    <molecule id="Q8L831-1"/>
    <property type="nucleotide sequence ID" value="NM_001334912.1"/>
</dbReference>
<dbReference type="RefSeq" id="NP_565218.1">
    <molecule id="Q8L831-1"/>
    <property type="nucleotide sequence ID" value="NM_106618.5"/>
</dbReference>
<dbReference type="SMR" id="Q8L831"/>
<dbReference type="BioGRID" id="29526">
    <property type="interactions" value="2"/>
</dbReference>
<dbReference type="FunCoup" id="Q8L831">
    <property type="interactions" value="1155"/>
</dbReference>
<dbReference type="IntAct" id="Q8L831">
    <property type="interactions" value="1"/>
</dbReference>
<dbReference type="STRING" id="3702.Q8L831"/>
<dbReference type="MEROPS" id="M49.005"/>
<dbReference type="iPTMnet" id="Q8L831"/>
<dbReference type="MetOSite" id="Q8L831"/>
<dbReference type="PaxDb" id="3702-AT1G79690.1"/>
<dbReference type="ProteomicsDB" id="248734">
    <molecule id="Q8L831-1"/>
</dbReference>
<dbReference type="EnsemblPlants" id="AT1G79690.1">
    <molecule id="Q8L831-1"/>
    <property type="protein sequence ID" value="AT1G79690.1"/>
    <property type="gene ID" value="AT1G79690"/>
</dbReference>
<dbReference type="EnsemblPlants" id="AT1G79690.2">
    <molecule id="Q8L831-1"/>
    <property type="protein sequence ID" value="AT1G79690.2"/>
    <property type="gene ID" value="AT1G79690"/>
</dbReference>
<dbReference type="GeneID" id="844308"/>
<dbReference type="Gramene" id="AT1G79690.1">
    <molecule id="Q8L831-1"/>
    <property type="protein sequence ID" value="AT1G79690.1"/>
    <property type="gene ID" value="AT1G79690"/>
</dbReference>
<dbReference type="Gramene" id="AT1G79690.2">
    <molecule id="Q8L831-1"/>
    <property type="protein sequence ID" value="AT1G79690.2"/>
    <property type="gene ID" value="AT1G79690"/>
</dbReference>
<dbReference type="KEGG" id="ath:AT1G79690"/>
<dbReference type="Araport" id="AT1G79690"/>
<dbReference type="TAIR" id="AT1G79690">
    <property type="gene designation" value="NUDT3"/>
</dbReference>
<dbReference type="eggNOG" id="ENOG502QT89">
    <property type="taxonomic scope" value="Eukaryota"/>
</dbReference>
<dbReference type="HOGENOM" id="CLU_020444_0_0_1"/>
<dbReference type="InParanoid" id="Q8L831"/>
<dbReference type="OMA" id="IGPYEVY"/>
<dbReference type="PhylomeDB" id="Q8L831"/>
<dbReference type="BRENDA" id="3.4.14.4">
    <property type="organism ID" value="399"/>
</dbReference>
<dbReference type="PRO" id="PR:Q8L831"/>
<dbReference type="Proteomes" id="UP000006548">
    <property type="component" value="Chromosome 1"/>
</dbReference>
<dbReference type="ExpressionAtlas" id="Q8L831">
    <property type="expression patterns" value="baseline and differential"/>
</dbReference>
<dbReference type="GO" id="GO:0005829">
    <property type="term" value="C:cytosol"/>
    <property type="evidence" value="ECO:0007005"/>
    <property type="project" value="TAIR"/>
</dbReference>
<dbReference type="GO" id="GO:0005739">
    <property type="term" value="C:mitochondrion"/>
    <property type="evidence" value="ECO:0007005"/>
    <property type="project" value="TAIR"/>
</dbReference>
<dbReference type="GO" id="GO:0000325">
    <property type="term" value="C:plant-type vacuole"/>
    <property type="evidence" value="ECO:0007005"/>
    <property type="project" value="TAIR"/>
</dbReference>
<dbReference type="GO" id="GO:0008239">
    <property type="term" value="F:dipeptidyl-peptidase activity"/>
    <property type="evidence" value="ECO:0000314"/>
    <property type="project" value="TAIR"/>
</dbReference>
<dbReference type="GO" id="GO:0046872">
    <property type="term" value="F:metal ion binding"/>
    <property type="evidence" value="ECO:0007669"/>
    <property type="project" value="UniProtKB-KW"/>
</dbReference>
<dbReference type="GO" id="GO:0016791">
    <property type="term" value="F:phosphatase activity"/>
    <property type="evidence" value="ECO:0000314"/>
    <property type="project" value="TAIR"/>
</dbReference>
<dbReference type="CDD" id="cd04692">
    <property type="entry name" value="NUDIX_Hydrolase"/>
    <property type="match status" value="1"/>
</dbReference>
<dbReference type="FunFam" id="3.90.79.10:FF:000056">
    <property type="entry name" value="Nudix hydrolase 3"/>
    <property type="match status" value="1"/>
</dbReference>
<dbReference type="Gene3D" id="3.30.540.30">
    <property type="match status" value="1"/>
</dbReference>
<dbReference type="Gene3D" id="3.90.79.10">
    <property type="entry name" value="Nucleoside Triphosphate Pyrophosphohydrolase"/>
    <property type="match status" value="1"/>
</dbReference>
<dbReference type="InterPro" id="IPR015797">
    <property type="entry name" value="NUDIX_hydrolase-like_dom_sf"/>
</dbReference>
<dbReference type="InterPro" id="IPR000086">
    <property type="entry name" value="NUDIX_hydrolase_dom"/>
</dbReference>
<dbReference type="InterPro" id="IPR039461">
    <property type="entry name" value="Peptidase_M49"/>
</dbReference>
<dbReference type="PANTHER" id="PTHR23422">
    <property type="entry name" value="DIPEPTIDYL PEPTIDASE III-RELATED"/>
    <property type="match status" value="1"/>
</dbReference>
<dbReference type="PANTHER" id="PTHR23422:SF9">
    <property type="entry name" value="ZN-DEPENDENT HYDROLASE"/>
    <property type="match status" value="1"/>
</dbReference>
<dbReference type="Pfam" id="PF00293">
    <property type="entry name" value="NUDIX"/>
    <property type="match status" value="1"/>
</dbReference>
<dbReference type="Pfam" id="PF03571">
    <property type="entry name" value="Peptidase_M49"/>
    <property type="match status" value="1"/>
</dbReference>
<dbReference type="SUPFAM" id="SSF55811">
    <property type="entry name" value="Nudix"/>
    <property type="match status" value="1"/>
</dbReference>
<dbReference type="PROSITE" id="PS51462">
    <property type="entry name" value="NUDIX"/>
    <property type="match status" value="1"/>
</dbReference>
<keyword id="KW-0025">Alternative splicing</keyword>
<keyword id="KW-0378">Hydrolase</keyword>
<keyword id="KW-0460">Magnesium</keyword>
<keyword id="KW-0464">Manganese</keyword>
<keyword id="KW-0479">Metal-binding</keyword>
<keyword id="KW-1185">Reference proteome</keyword>
<reference key="1">
    <citation type="journal article" date="2000" name="Nature">
        <title>Sequence and analysis of chromosome 1 of the plant Arabidopsis thaliana.</title>
        <authorList>
            <person name="Theologis A."/>
            <person name="Ecker J.R."/>
            <person name="Palm C.J."/>
            <person name="Federspiel N.A."/>
            <person name="Kaul S."/>
            <person name="White O."/>
            <person name="Alonso J."/>
            <person name="Altafi H."/>
            <person name="Araujo R."/>
            <person name="Bowman C.L."/>
            <person name="Brooks S.Y."/>
            <person name="Buehler E."/>
            <person name="Chan A."/>
            <person name="Chao Q."/>
            <person name="Chen H."/>
            <person name="Cheuk R.F."/>
            <person name="Chin C.W."/>
            <person name="Chung M.K."/>
            <person name="Conn L."/>
            <person name="Conway A.B."/>
            <person name="Conway A.R."/>
            <person name="Creasy T.H."/>
            <person name="Dewar K."/>
            <person name="Dunn P."/>
            <person name="Etgu P."/>
            <person name="Feldblyum T.V."/>
            <person name="Feng J.-D."/>
            <person name="Fong B."/>
            <person name="Fujii C.Y."/>
            <person name="Gill J.E."/>
            <person name="Goldsmith A.D."/>
            <person name="Haas B."/>
            <person name="Hansen N.F."/>
            <person name="Hughes B."/>
            <person name="Huizar L."/>
            <person name="Hunter J.L."/>
            <person name="Jenkins J."/>
            <person name="Johnson-Hopson C."/>
            <person name="Khan S."/>
            <person name="Khaykin E."/>
            <person name="Kim C.J."/>
            <person name="Koo H.L."/>
            <person name="Kremenetskaia I."/>
            <person name="Kurtz D.B."/>
            <person name="Kwan A."/>
            <person name="Lam B."/>
            <person name="Langin-Hooper S."/>
            <person name="Lee A."/>
            <person name="Lee J.M."/>
            <person name="Lenz C.A."/>
            <person name="Li J.H."/>
            <person name="Li Y.-P."/>
            <person name="Lin X."/>
            <person name="Liu S.X."/>
            <person name="Liu Z.A."/>
            <person name="Luros J.S."/>
            <person name="Maiti R."/>
            <person name="Marziali A."/>
            <person name="Militscher J."/>
            <person name="Miranda M."/>
            <person name="Nguyen M."/>
            <person name="Nierman W.C."/>
            <person name="Osborne B.I."/>
            <person name="Pai G."/>
            <person name="Peterson J."/>
            <person name="Pham P.K."/>
            <person name="Rizzo M."/>
            <person name="Rooney T."/>
            <person name="Rowley D."/>
            <person name="Sakano H."/>
            <person name="Salzberg S.L."/>
            <person name="Schwartz J.R."/>
            <person name="Shinn P."/>
            <person name="Southwick A.M."/>
            <person name="Sun H."/>
            <person name="Tallon L.J."/>
            <person name="Tambunga G."/>
            <person name="Toriumi M.J."/>
            <person name="Town C.D."/>
            <person name="Utterback T."/>
            <person name="Van Aken S."/>
            <person name="Vaysberg M."/>
            <person name="Vysotskaia V.S."/>
            <person name="Walker M."/>
            <person name="Wu D."/>
            <person name="Yu G."/>
            <person name="Fraser C.M."/>
            <person name="Venter J.C."/>
            <person name="Davis R.W."/>
        </authorList>
    </citation>
    <scope>NUCLEOTIDE SEQUENCE [LARGE SCALE GENOMIC DNA]</scope>
    <source>
        <strain>cv. Columbia</strain>
    </source>
</reference>
<reference key="2">
    <citation type="journal article" date="2017" name="Plant J.">
        <title>Araport11: a complete reannotation of the Arabidopsis thaliana reference genome.</title>
        <authorList>
            <person name="Cheng C.Y."/>
            <person name="Krishnakumar V."/>
            <person name="Chan A.P."/>
            <person name="Thibaud-Nissen F."/>
            <person name="Schobel S."/>
            <person name="Town C.D."/>
        </authorList>
    </citation>
    <scope>GENOME REANNOTATION</scope>
    <source>
        <strain>cv. Columbia</strain>
    </source>
</reference>
<reference key="3">
    <citation type="journal article" date="2002" name="Science">
        <title>Functional annotation of a full-length Arabidopsis cDNA collection.</title>
        <authorList>
            <person name="Seki M."/>
            <person name="Narusaka M."/>
            <person name="Kamiya A."/>
            <person name="Ishida J."/>
            <person name="Satou M."/>
            <person name="Sakurai T."/>
            <person name="Nakajima M."/>
            <person name="Enju A."/>
            <person name="Akiyama K."/>
            <person name="Oono Y."/>
            <person name="Muramatsu M."/>
            <person name="Hayashizaki Y."/>
            <person name="Kawai J."/>
            <person name="Carninci P."/>
            <person name="Itoh M."/>
            <person name="Ishii Y."/>
            <person name="Arakawa T."/>
            <person name="Shibata K."/>
            <person name="Shinagawa A."/>
            <person name="Shinozaki K."/>
        </authorList>
    </citation>
    <scope>NUCLEOTIDE SEQUENCE [LARGE SCALE MRNA] (ISOFORM 2)</scope>
    <source>
        <strain>cv. Columbia</strain>
    </source>
</reference>
<reference key="4">
    <citation type="journal article" date="2003" name="Science">
        <title>Empirical analysis of transcriptional activity in the Arabidopsis genome.</title>
        <authorList>
            <person name="Yamada K."/>
            <person name="Lim J."/>
            <person name="Dale J.M."/>
            <person name="Chen H."/>
            <person name="Shinn P."/>
            <person name="Palm C.J."/>
            <person name="Southwick A.M."/>
            <person name="Wu H.C."/>
            <person name="Kim C.J."/>
            <person name="Nguyen M."/>
            <person name="Pham P.K."/>
            <person name="Cheuk R.F."/>
            <person name="Karlin-Newmann G."/>
            <person name="Liu S.X."/>
            <person name="Lam B."/>
            <person name="Sakano H."/>
            <person name="Wu T."/>
            <person name="Yu G."/>
            <person name="Miranda M."/>
            <person name="Quach H.L."/>
            <person name="Tripp M."/>
            <person name="Chang C.H."/>
            <person name="Lee J.M."/>
            <person name="Toriumi M.J."/>
            <person name="Chan M.M."/>
            <person name="Tang C.C."/>
            <person name="Onodera C.S."/>
            <person name="Deng J.M."/>
            <person name="Akiyama K."/>
            <person name="Ansari Y."/>
            <person name="Arakawa T."/>
            <person name="Banh J."/>
            <person name="Banno F."/>
            <person name="Bowser L."/>
            <person name="Brooks S.Y."/>
            <person name="Carninci P."/>
            <person name="Chao Q."/>
            <person name="Choy N."/>
            <person name="Enju A."/>
            <person name="Goldsmith A.D."/>
            <person name="Gurjal M."/>
            <person name="Hansen N.F."/>
            <person name="Hayashizaki Y."/>
            <person name="Johnson-Hopson C."/>
            <person name="Hsuan V.W."/>
            <person name="Iida K."/>
            <person name="Karnes M."/>
            <person name="Khan S."/>
            <person name="Koesema E."/>
            <person name="Ishida J."/>
            <person name="Jiang P.X."/>
            <person name="Jones T."/>
            <person name="Kawai J."/>
            <person name="Kamiya A."/>
            <person name="Meyers C."/>
            <person name="Nakajima M."/>
            <person name="Narusaka M."/>
            <person name="Seki M."/>
            <person name="Sakurai T."/>
            <person name="Satou M."/>
            <person name="Tamse R."/>
            <person name="Vaysberg M."/>
            <person name="Wallender E.K."/>
            <person name="Wong C."/>
            <person name="Yamamura Y."/>
            <person name="Yuan S."/>
            <person name="Shinozaki K."/>
            <person name="Davis R.W."/>
            <person name="Theologis A."/>
            <person name="Ecker J.R."/>
        </authorList>
    </citation>
    <scope>NUCLEOTIDE SEQUENCE [LARGE SCALE MRNA] (ISOFORM 1)</scope>
    <source>
        <strain>cv. Columbia</strain>
    </source>
</reference>
<reference key="5">
    <citation type="journal article" date="2005" name="J. Biol. Chem.">
        <title>Comprehensive analysis of cytosolic nudix hydrolases in Arabidopsis thaliana.</title>
        <authorList>
            <person name="Ogawa T."/>
            <person name="Ueda Y."/>
            <person name="Yoshimura K."/>
            <person name="Shigeoka S."/>
        </authorList>
    </citation>
    <scope>TISSUE SPECIFICITY</scope>
</reference>
<organism>
    <name type="scientific">Arabidopsis thaliana</name>
    <name type="common">Mouse-ear cress</name>
    <dbReference type="NCBI Taxonomy" id="3702"/>
    <lineage>
        <taxon>Eukaryota</taxon>
        <taxon>Viridiplantae</taxon>
        <taxon>Streptophyta</taxon>
        <taxon>Embryophyta</taxon>
        <taxon>Tracheophyta</taxon>
        <taxon>Spermatophyta</taxon>
        <taxon>Magnoliopsida</taxon>
        <taxon>eudicotyledons</taxon>
        <taxon>Gunneridae</taxon>
        <taxon>Pentapetalae</taxon>
        <taxon>rosids</taxon>
        <taxon>malvids</taxon>
        <taxon>Brassicales</taxon>
        <taxon>Brassicaceae</taxon>
        <taxon>Camelineae</taxon>
        <taxon>Arabidopsis</taxon>
    </lineage>
</organism>
<accession>Q8L831</accession>
<accession>Q8GY80</accession>
<accession>Q93ZN1</accession>
<accession>Q9MA07</accession>
<proteinExistence type="evidence at protein level"/>
<protein>
    <recommendedName>
        <fullName>Nudix hydrolase 3</fullName>
        <shortName>AtNUDT3</shortName>
        <ecNumber>3.6.1.-</ecNumber>
    </recommendedName>
</protein>
<gene>
    <name type="primary">NUDT3</name>
    <name type="synonym">NUDX3</name>
    <name type="ordered locus">At1g79690</name>
    <name type="ORF">F20B17.11</name>
</gene>
<name>NUDT3_ARATH</name>
<evidence type="ECO:0000250" key="1"/>
<evidence type="ECO:0000255" key="2">
    <source>
        <dbReference type="PROSITE-ProRule" id="PRU00794"/>
    </source>
</evidence>
<evidence type="ECO:0000256" key="3">
    <source>
        <dbReference type="SAM" id="MobiDB-lite"/>
    </source>
</evidence>
<evidence type="ECO:0000269" key="4">
    <source>
    </source>
</evidence>
<evidence type="ECO:0000303" key="5">
    <source>
    </source>
</evidence>
<evidence type="ECO:0000305" key="6"/>
<sequence length="772" mass="86857">MAEEHFDVLTKSGEKTGVSKPRGEVHRDGDYHRAVHVWIFVETTQQLLLQLRSDDKDSWPGQWDISSAGHISAGDTSLLSAQRELEEELGVKLPKDAFEKIFVFLQECVTNDGKFINNEFNDVYLVTILHPIPLEAFTLQKEEVSAVKYVPYEEYRNFLSKEDPAYVPYDVNGEYGKLFDIIRQRCQVNTEARSLSLQKQLQRYSPVTLEAKLTELSEADQKALGLIVKAAKIMDDIFYEQVWNSNPALRDWLKDHANASKLDKLKWDYFTINKSPWSSLDENEAFLSTADSAVKLLPGATKAIAGWKGLEYRAAFPVTKPPGANFYPPDMDKMEFTLWLNGLTEEQKHAATGFFSVIKRRSEANLDASDHLASSTKKLPDSNSDLYSIPYSEIYRPFLKKASEFLQKAGDLVSSPSLKKLLHSKAEAFLSNEYYESDIAWMDLDSKLDITIGPYETYEDEIFGYKATFETFIGIRDDKATADLKLFGDNLKLLEDNLPLESVYKSTDVSAAPIRVIQLIYNSGDVKGPQTVAYNLPNDEKIVKDRGTSMVMLKNVQEAKFEHILKPIAEITISKEQRGLVDFDSFFTHTICHECCHGIGPHTITLPGGQTSTVRKELQEVHSAMEEAKADIVGLWALKFLITKGLLSKSMVESMYVSFLAGCFRSIRFGLTEAHGKGQALQFNYLYEKGAFVFHEDSTFSVDFAKIEGAVESLSHEILTIQGKGDKNAATLLLNKYCTITGPLKTALENLERVKVPVDISPTFPLAEALMN</sequence>
<comment type="function">
    <text evidence="1">Probably mediates the hydrolysis of some nucleoside diphosphate derivatives.</text>
</comment>
<comment type="cofactor">
    <cofactor evidence="1">
        <name>Mg(2+)</name>
        <dbReference type="ChEBI" id="CHEBI:18420"/>
    </cofactor>
    <cofactor evidence="1">
        <name>Mn(2+)</name>
        <dbReference type="ChEBI" id="CHEBI:29035"/>
    </cofactor>
</comment>
<comment type="interaction">
    <interactant intactId="EBI-1807753">
        <id>Q8L831</id>
    </interactant>
    <interactant intactId="EBI-1100917">
        <id>Q9ZWS7</id>
        <label>ARR7</label>
    </interactant>
    <organismsDiffer>false</organismsDiffer>
    <experiments>2</experiments>
</comment>
<comment type="alternative products">
    <event type="alternative splicing"/>
    <isoform>
        <id>Q8L831-1</id>
        <name>1</name>
        <sequence type="displayed"/>
    </isoform>
    <isoform>
        <id>Q8L831-2</id>
        <name>2</name>
        <sequence type="described" ref="VSP_014284 VSP_014285"/>
    </isoform>
</comment>
<comment type="tissue specificity">
    <text evidence="4">Expressed in roots, stems and, at lower level, leaves.</text>
</comment>
<comment type="similarity">
    <text evidence="6">Belongs to the Nudix hydrolase family.</text>
</comment>
<comment type="sequence caution" evidence="6">
    <conflict type="frameshift">
        <sequence resource="EMBL-CDS" id="AAL08298"/>
    </conflict>
</comment>